<proteinExistence type="inferred from homology"/>
<keyword id="KW-0687">Ribonucleoprotein</keyword>
<keyword id="KW-0689">Ribosomal protein</keyword>
<keyword id="KW-0694">RNA-binding</keyword>
<keyword id="KW-0699">rRNA-binding</keyword>
<name>RS15_PSE14</name>
<sequence length="89" mass="10001">MALSVEEKAQIVTDYQQAVGDTGSPEVQVALLTANINKLQGHFKANGKDHHSRRGLIRMVNQRRKLLDYLKGKDVSRYSALIGRLGLRR</sequence>
<protein>
    <recommendedName>
        <fullName evidence="1">Small ribosomal subunit protein uS15</fullName>
    </recommendedName>
    <alternativeName>
        <fullName evidence="2">30S ribosomal protein S15</fullName>
    </alternativeName>
</protein>
<gene>
    <name evidence="1" type="primary">rpsO</name>
    <name type="ordered locus">PSPPH_4186</name>
</gene>
<organism>
    <name type="scientific">Pseudomonas savastanoi pv. phaseolicola (strain 1448A / Race 6)</name>
    <name type="common">Pseudomonas syringae pv. phaseolicola (strain 1448A / Race 6)</name>
    <dbReference type="NCBI Taxonomy" id="264730"/>
    <lineage>
        <taxon>Bacteria</taxon>
        <taxon>Pseudomonadati</taxon>
        <taxon>Pseudomonadota</taxon>
        <taxon>Gammaproteobacteria</taxon>
        <taxon>Pseudomonadales</taxon>
        <taxon>Pseudomonadaceae</taxon>
        <taxon>Pseudomonas</taxon>
    </lineage>
</organism>
<comment type="function">
    <text evidence="1">One of the primary rRNA binding proteins, it binds directly to 16S rRNA where it helps nucleate assembly of the platform of the 30S subunit by binding and bridging several RNA helices of the 16S rRNA.</text>
</comment>
<comment type="function">
    <text evidence="1">Forms an intersubunit bridge (bridge B4) with the 23S rRNA of the 50S subunit in the ribosome.</text>
</comment>
<comment type="subunit">
    <text evidence="1">Part of the 30S ribosomal subunit. Forms a bridge to the 50S subunit in the 70S ribosome, contacting the 23S rRNA.</text>
</comment>
<comment type="similarity">
    <text evidence="1">Belongs to the universal ribosomal protein uS15 family.</text>
</comment>
<reference key="1">
    <citation type="journal article" date="2005" name="J. Bacteriol.">
        <title>Whole-genome sequence analysis of Pseudomonas syringae pv. phaseolicola 1448A reveals divergence among pathovars in genes involved in virulence and transposition.</title>
        <authorList>
            <person name="Joardar V."/>
            <person name="Lindeberg M."/>
            <person name="Jackson R.W."/>
            <person name="Selengut J."/>
            <person name="Dodson R."/>
            <person name="Brinkac L.M."/>
            <person name="Daugherty S.C."/>
            <person name="DeBoy R.T."/>
            <person name="Durkin A.S."/>
            <person name="Gwinn Giglio M."/>
            <person name="Madupu R."/>
            <person name="Nelson W.C."/>
            <person name="Rosovitz M.J."/>
            <person name="Sullivan S.A."/>
            <person name="Crabtree J."/>
            <person name="Creasy T."/>
            <person name="Davidsen T.M."/>
            <person name="Haft D.H."/>
            <person name="Zafar N."/>
            <person name="Zhou L."/>
            <person name="Halpin R."/>
            <person name="Holley T."/>
            <person name="Khouri H.M."/>
            <person name="Feldblyum T.V."/>
            <person name="White O."/>
            <person name="Fraser C.M."/>
            <person name="Chatterjee A.K."/>
            <person name="Cartinhour S."/>
            <person name="Schneider D."/>
            <person name="Mansfield J.W."/>
            <person name="Collmer A."/>
            <person name="Buell R."/>
        </authorList>
    </citation>
    <scope>NUCLEOTIDE SEQUENCE [LARGE SCALE GENOMIC DNA]</scope>
    <source>
        <strain>1448A / Race 6</strain>
    </source>
</reference>
<dbReference type="EMBL" id="CP000058">
    <property type="protein sequence ID" value="AAZ34999.1"/>
    <property type="molecule type" value="Genomic_DNA"/>
</dbReference>
<dbReference type="RefSeq" id="WP_002555121.1">
    <property type="nucleotide sequence ID" value="NC_005773.3"/>
</dbReference>
<dbReference type="SMR" id="Q48E80"/>
<dbReference type="GeneID" id="96220657"/>
<dbReference type="KEGG" id="psp:PSPPH_4186"/>
<dbReference type="eggNOG" id="COG0184">
    <property type="taxonomic scope" value="Bacteria"/>
</dbReference>
<dbReference type="HOGENOM" id="CLU_148518_0_0_6"/>
<dbReference type="Proteomes" id="UP000000551">
    <property type="component" value="Chromosome"/>
</dbReference>
<dbReference type="GO" id="GO:0022627">
    <property type="term" value="C:cytosolic small ribosomal subunit"/>
    <property type="evidence" value="ECO:0007669"/>
    <property type="project" value="TreeGrafter"/>
</dbReference>
<dbReference type="GO" id="GO:0019843">
    <property type="term" value="F:rRNA binding"/>
    <property type="evidence" value="ECO:0007669"/>
    <property type="project" value="UniProtKB-UniRule"/>
</dbReference>
<dbReference type="GO" id="GO:0003735">
    <property type="term" value="F:structural constituent of ribosome"/>
    <property type="evidence" value="ECO:0007669"/>
    <property type="project" value="InterPro"/>
</dbReference>
<dbReference type="GO" id="GO:0006412">
    <property type="term" value="P:translation"/>
    <property type="evidence" value="ECO:0007669"/>
    <property type="project" value="UniProtKB-UniRule"/>
</dbReference>
<dbReference type="CDD" id="cd00353">
    <property type="entry name" value="Ribosomal_S15p_S13e"/>
    <property type="match status" value="1"/>
</dbReference>
<dbReference type="FunFam" id="1.10.287.10:FF:000002">
    <property type="entry name" value="30S ribosomal protein S15"/>
    <property type="match status" value="1"/>
</dbReference>
<dbReference type="Gene3D" id="6.10.250.3130">
    <property type="match status" value="1"/>
</dbReference>
<dbReference type="Gene3D" id="1.10.287.10">
    <property type="entry name" value="S15/NS1, RNA-binding"/>
    <property type="match status" value="1"/>
</dbReference>
<dbReference type="HAMAP" id="MF_01343_B">
    <property type="entry name" value="Ribosomal_uS15_B"/>
    <property type="match status" value="1"/>
</dbReference>
<dbReference type="InterPro" id="IPR000589">
    <property type="entry name" value="Ribosomal_uS15"/>
</dbReference>
<dbReference type="InterPro" id="IPR005290">
    <property type="entry name" value="Ribosomal_uS15_bac-type"/>
</dbReference>
<dbReference type="InterPro" id="IPR009068">
    <property type="entry name" value="uS15_NS1_RNA-bd_sf"/>
</dbReference>
<dbReference type="NCBIfam" id="TIGR00952">
    <property type="entry name" value="S15_bact"/>
    <property type="match status" value="1"/>
</dbReference>
<dbReference type="PANTHER" id="PTHR23321">
    <property type="entry name" value="RIBOSOMAL PROTEIN S15, BACTERIAL AND ORGANELLAR"/>
    <property type="match status" value="1"/>
</dbReference>
<dbReference type="PANTHER" id="PTHR23321:SF26">
    <property type="entry name" value="SMALL RIBOSOMAL SUBUNIT PROTEIN US15M"/>
    <property type="match status" value="1"/>
</dbReference>
<dbReference type="Pfam" id="PF00312">
    <property type="entry name" value="Ribosomal_S15"/>
    <property type="match status" value="1"/>
</dbReference>
<dbReference type="SMART" id="SM01387">
    <property type="entry name" value="Ribosomal_S15"/>
    <property type="match status" value="1"/>
</dbReference>
<dbReference type="SUPFAM" id="SSF47060">
    <property type="entry name" value="S15/NS1 RNA-binding domain"/>
    <property type="match status" value="1"/>
</dbReference>
<dbReference type="PROSITE" id="PS00362">
    <property type="entry name" value="RIBOSOMAL_S15"/>
    <property type="match status" value="1"/>
</dbReference>
<feature type="chain" id="PRO_0000115514" description="Small ribosomal subunit protein uS15">
    <location>
        <begin position="1"/>
        <end position="89"/>
    </location>
</feature>
<evidence type="ECO:0000255" key="1">
    <source>
        <dbReference type="HAMAP-Rule" id="MF_01343"/>
    </source>
</evidence>
<evidence type="ECO:0000305" key="2"/>
<accession>Q48E80</accession>